<proteinExistence type="inferred from homology"/>
<evidence type="ECO:0000255" key="1">
    <source>
        <dbReference type="HAMAP-Rule" id="MF_00512"/>
    </source>
</evidence>
<evidence type="ECO:0000305" key="2"/>
<dbReference type="EMBL" id="CP000102">
    <property type="protein sequence ID" value="ABC57026.1"/>
    <property type="molecule type" value="Genomic_DNA"/>
</dbReference>
<dbReference type="RefSeq" id="WP_011406226.1">
    <property type="nucleotide sequence ID" value="NC_007681.1"/>
</dbReference>
<dbReference type="SMR" id="Q2NGM7"/>
<dbReference type="STRING" id="339860.Msp_0628"/>
<dbReference type="KEGG" id="mst:Msp_0628"/>
<dbReference type="eggNOG" id="arCOG01946">
    <property type="taxonomic scope" value="Archaea"/>
</dbReference>
<dbReference type="HOGENOM" id="CLU_109671_1_1_2"/>
<dbReference type="OrthoDB" id="7793at2157"/>
<dbReference type="Proteomes" id="UP000001931">
    <property type="component" value="Chromosome"/>
</dbReference>
<dbReference type="GO" id="GO:1990904">
    <property type="term" value="C:ribonucleoprotein complex"/>
    <property type="evidence" value="ECO:0007669"/>
    <property type="project" value="UniProtKB-KW"/>
</dbReference>
<dbReference type="GO" id="GO:0005840">
    <property type="term" value="C:ribosome"/>
    <property type="evidence" value="ECO:0007669"/>
    <property type="project" value="UniProtKB-KW"/>
</dbReference>
<dbReference type="GO" id="GO:0003735">
    <property type="term" value="F:structural constituent of ribosome"/>
    <property type="evidence" value="ECO:0007669"/>
    <property type="project" value="InterPro"/>
</dbReference>
<dbReference type="GO" id="GO:0006412">
    <property type="term" value="P:translation"/>
    <property type="evidence" value="ECO:0007669"/>
    <property type="project" value="UniProtKB-UniRule"/>
</dbReference>
<dbReference type="HAMAP" id="MF_00512">
    <property type="entry name" value="Ribosomal_eS6"/>
    <property type="match status" value="1"/>
</dbReference>
<dbReference type="InterPro" id="IPR001377">
    <property type="entry name" value="Ribosomal_eS6"/>
</dbReference>
<dbReference type="InterPro" id="IPR020924">
    <property type="entry name" value="Ribosomal_eS6_arc"/>
</dbReference>
<dbReference type="InterPro" id="IPR018282">
    <property type="entry name" value="Ribosomal_eS6_CS"/>
</dbReference>
<dbReference type="NCBIfam" id="NF003294">
    <property type="entry name" value="PRK04290.1-3"/>
    <property type="match status" value="1"/>
</dbReference>
<dbReference type="PANTHER" id="PTHR11502">
    <property type="entry name" value="40S RIBOSOMAL PROTEIN S6"/>
    <property type="match status" value="1"/>
</dbReference>
<dbReference type="Pfam" id="PF01092">
    <property type="entry name" value="Ribosomal_S6e"/>
    <property type="match status" value="1"/>
</dbReference>
<dbReference type="SMART" id="SM01405">
    <property type="entry name" value="Ribosomal_S6e"/>
    <property type="match status" value="1"/>
</dbReference>
<dbReference type="PROSITE" id="PS00578">
    <property type="entry name" value="RIBOSOMAL_S6E"/>
    <property type="match status" value="1"/>
</dbReference>
<reference key="1">
    <citation type="journal article" date="2006" name="J. Bacteriol.">
        <title>The genome sequence of Methanosphaera stadtmanae reveals why this human intestinal archaeon is restricted to methanol and H2 for methane formation and ATP synthesis.</title>
        <authorList>
            <person name="Fricke W.F."/>
            <person name="Seedorf H."/>
            <person name="Henne A."/>
            <person name="Kruer M."/>
            <person name="Liesegang H."/>
            <person name="Hedderich R."/>
            <person name="Gottschalk G."/>
            <person name="Thauer R.K."/>
        </authorList>
    </citation>
    <scope>NUCLEOTIDE SEQUENCE [LARGE SCALE GENOMIC DNA]</scope>
    <source>
        <strain>ATCC 43021 / DSM 3091 / JCM 11832 / MCB-3</strain>
    </source>
</reference>
<protein>
    <recommendedName>
        <fullName evidence="1">Small ribosomal subunit protein eS6</fullName>
    </recommendedName>
    <alternativeName>
        <fullName evidence="2">30S ribosomal protein S6e</fullName>
    </alternativeName>
</protein>
<keyword id="KW-1185">Reference proteome</keyword>
<keyword id="KW-0687">Ribonucleoprotein</keyword>
<keyword id="KW-0689">Ribosomal protein</keyword>
<organism>
    <name type="scientific">Methanosphaera stadtmanae (strain ATCC 43021 / DSM 3091 / JCM 11832 / MCB-3)</name>
    <dbReference type="NCBI Taxonomy" id="339860"/>
    <lineage>
        <taxon>Archaea</taxon>
        <taxon>Methanobacteriati</taxon>
        <taxon>Methanobacteriota</taxon>
        <taxon>Methanomada group</taxon>
        <taxon>Methanobacteria</taxon>
        <taxon>Methanobacteriales</taxon>
        <taxon>Methanobacteriaceae</taxon>
        <taxon>Methanosphaera</taxon>
    </lineage>
</organism>
<name>RS6E_METST</name>
<comment type="similarity">
    <text evidence="1">Belongs to the eukaryotic ribosomal protein eS6 family.</text>
</comment>
<feature type="chain" id="PRO_0000258624" description="Small ribosomal subunit protein eS6">
    <location>
        <begin position="1"/>
        <end position="130"/>
    </location>
</feature>
<accession>Q2NGM7</accession>
<sequence length="130" mass="14440">MVYKVVVSDEDVTYQLELEDKDAKTVNGLKIGEEFNGGVLGLKGYKLRITGGSDKNGFPMKEDVDGTRRFKSLVNGGTGFKPTKKGLRRRKTVRGNTIADDISQINVKVSERGEQTLAEIFAEPEEEQEE</sequence>
<gene>
    <name evidence="1" type="primary">rps6e</name>
    <name type="ordered locus">Msp_0628</name>
</gene>